<organism>
    <name type="scientific">Bacillus velezensis (strain DSM 23117 / BGSC 10A6 / LMG 26770 / FZB42)</name>
    <name type="common">Bacillus amyloliquefaciens subsp. plantarum</name>
    <dbReference type="NCBI Taxonomy" id="326423"/>
    <lineage>
        <taxon>Bacteria</taxon>
        <taxon>Bacillati</taxon>
        <taxon>Bacillota</taxon>
        <taxon>Bacilli</taxon>
        <taxon>Bacillales</taxon>
        <taxon>Bacillaceae</taxon>
        <taxon>Bacillus</taxon>
        <taxon>Bacillus amyloliquefaciens group</taxon>
    </lineage>
</organism>
<evidence type="ECO:0000255" key="1">
    <source>
        <dbReference type="HAMAP-Rule" id="MF_00159"/>
    </source>
</evidence>
<name>ISPG_BACVZ</name>
<comment type="function">
    <text evidence="1">Converts 2C-methyl-D-erythritol 2,4-cyclodiphosphate (ME-2,4cPP) into 1-hydroxy-2-methyl-2-(E)-butenyl 4-diphosphate.</text>
</comment>
<comment type="catalytic activity">
    <reaction evidence="1">
        <text>(2E)-4-hydroxy-3-methylbut-2-enyl diphosphate + oxidized [flavodoxin] + H2O + 2 H(+) = 2-C-methyl-D-erythritol 2,4-cyclic diphosphate + reduced [flavodoxin]</text>
        <dbReference type="Rhea" id="RHEA:43604"/>
        <dbReference type="Rhea" id="RHEA-COMP:10622"/>
        <dbReference type="Rhea" id="RHEA-COMP:10623"/>
        <dbReference type="ChEBI" id="CHEBI:15377"/>
        <dbReference type="ChEBI" id="CHEBI:15378"/>
        <dbReference type="ChEBI" id="CHEBI:57618"/>
        <dbReference type="ChEBI" id="CHEBI:58210"/>
        <dbReference type="ChEBI" id="CHEBI:58483"/>
        <dbReference type="ChEBI" id="CHEBI:128753"/>
        <dbReference type="EC" id="1.17.7.3"/>
    </reaction>
</comment>
<comment type="cofactor">
    <cofactor evidence="1">
        <name>[4Fe-4S] cluster</name>
        <dbReference type="ChEBI" id="CHEBI:49883"/>
    </cofactor>
    <text evidence="1">Binds 1 [4Fe-4S] cluster.</text>
</comment>
<comment type="pathway">
    <text evidence="1">Isoprenoid biosynthesis; isopentenyl diphosphate biosynthesis via DXP pathway; isopentenyl diphosphate from 1-deoxy-D-xylulose 5-phosphate: step 5/6.</text>
</comment>
<comment type="similarity">
    <text evidence="1">Belongs to the IspG family.</text>
</comment>
<dbReference type="EC" id="1.17.7.3" evidence="1"/>
<dbReference type="EMBL" id="CP000560">
    <property type="protein sequence ID" value="ABS74698.1"/>
    <property type="molecule type" value="Genomic_DNA"/>
</dbReference>
<dbReference type="SMR" id="A7Z6S2"/>
<dbReference type="KEGG" id="bay:RBAM_023380"/>
<dbReference type="HOGENOM" id="CLU_042258_0_0_9"/>
<dbReference type="UniPathway" id="UPA00056">
    <property type="reaction ID" value="UER00096"/>
</dbReference>
<dbReference type="Proteomes" id="UP000001120">
    <property type="component" value="Chromosome"/>
</dbReference>
<dbReference type="GO" id="GO:0051539">
    <property type="term" value="F:4 iron, 4 sulfur cluster binding"/>
    <property type="evidence" value="ECO:0007669"/>
    <property type="project" value="UniProtKB-UniRule"/>
</dbReference>
<dbReference type="GO" id="GO:0046429">
    <property type="term" value="F:4-hydroxy-3-methylbut-2-en-1-yl diphosphate synthase activity (ferredoxin)"/>
    <property type="evidence" value="ECO:0007669"/>
    <property type="project" value="UniProtKB-UniRule"/>
</dbReference>
<dbReference type="GO" id="GO:0141197">
    <property type="term" value="F:4-hydroxy-3-methylbut-2-enyl-diphosphate synthase activity (flavodoxin)"/>
    <property type="evidence" value="ECO:0007669"/>
    <property type="project" value="UniProtKB-EC"/>
</dbReference>
<dbReference type="GO" id="GO:0005506">
    <property type="term" value="F:iron ion binding"/>
    <property type="evidence" value="ECO:0007669"/>
    <property type="project" value="InterPro"/>
</dbReference>
<dbReference type="GO" id="GO:0019288">
    <property type="term" value="P:isopentenyl diphosphate biosynthetic process, methylerythritol 4-phosphate pathway"/>
    <property type="evidence" value="ECO:0007669"/>
    <property type="project" value="UniProtKB-UniRule"/>
</dbReference>
<dbReference type="GO" id="GO:0016114">
    <property type="term" value="P:terpenoid biosynthetic process"/>
    <property type="evidence" value="ECO:0007669"/>
    <property type="project" value="InterPro"/>
</dbReference>
<dbReference type="FunFam" id="3.20.20.20:FF:000001">
    <property type="entry name" value="4-hydroxy-3-methylbut-2-en-1-yl diphosphate synthase (flavodoxin)"/>
    <property type="match status" value="1"/>
</dbReference>
<dbReference type="FunFam" id="3.30.413.10:FF:000005">
    <property type="entry name" value="4-hydroxy-3-methylbut-2-en-1-yl diphosphate synthase (flavodoxin)"/>
    <property type="match status" value="1"/>
</dbReference>
<dbReference type="Gene3D" id="3.20.20.20">
    <property type="entry name" value="Dihydropteroate synthase-like"/>
    <property type="match status" value="1"/>
</dbReference>
<dbReference type="Gene3D" id="3.30.413.10">
    <property type="entry name" value="Sulfite Reductase Hemoprotein, domain 1"/>
    <property type="match status" value="1"/>
</dbReference>
<dbReference type="HAMAP" id="MF_00159">
    <property type="entry name" value="IspG"/>
    <property type="match status" value="1"/>
</dbReference>
<dbReference type="InterPro" id="IPR011005">
    <property type="entry name" value="Dihydropteroate_synth-like_sf"/>
</dbReference>
<dbReference type="InterPro" id="IPR016425">
    <property type="entry name" value="IspG_bac"/>
</dbReference>
<dbReference type="InterPro" id="IPR004588">
    <property type="entry name" value="IspG_bac-typ"/>
</dbReference>
<dbReference type="InterPro" id="IPR045854">
    <property type="entry name" value="NO2/SO3_Rdtase_4Fe4S_sf"/>
</dbReference>
<dbReference type="NCBIfam" id="TIGR00612">
    <property type="entry name" value="ispG_gcpE"/>
    <property type="match status" value="1"/>
</dbReference>
<dbReference type="NCBIfam" id="NF001540">
    <property type="entry name" value="PRK00366.1"/>
    <property type="match status" value="1"/>
</dbReference>
<dbReference type="PANTHER" id="PTHR30454">
    <property type="entry name" value="4-HYDROXY-3-METHYLBUT-2-EN-1-YL DIPHOSPHATE SYNTHASE"/>
    <property type="match status" value="1"/>
</dbReference>
<dbReference type="PANTHER" id="PTHR30454:SF0">
    <property type="entry name" value="4-HYDROXY-3-METHYLBUT-2-EN-1-YL DIPHOSPHATE SYNTHASE (FERREDOXIN), CHLOROPLASTIC"/>
    <property type="match status" value="1"/>
</dbReference>
<dbReference type="Pfam" id="PF04551">
    <property type="entry name" value="GcpE"/>
    <property type="match status" value="1"/>
</dbReference>
<dbReference type="PIRSF" id="PIRSF004640">
    <property type="entry name" value="IspG"/>
    <property type="match status" value="1"/>
</dbReference>
<dbReference type="SUPFAM" id="SSF51717">
    <property type="entry name" value="Dihydropteroate synthetase-like"/>
    <property type="match status" value="1"/>
</dbReference>
<dbReference type="SUPFAM" id="SSF56014">
    <property type="entry name" value="Nitrite and sulphite reductase 4Fe-4S domain-like"/>
    <property type="match status" value="1"/>
</dbReference>
<accession>A7Z6S2</accession>
<gene>
    <name evidence="1" type="primary">ispG</name>
    <name type="ordered locus">RBAM_023380</name>
</gene>
<keyword id="KW-0004">4Fe-4S</keyword>
<keyword id="KW-0408">Iron</keyword>
<keyword id="KW-0411">Iron-sulfur</keyword>
<keyword id="KW-0414">Isoprene biosynthesis</keyword>
<keyword id="KW-0479">Metal-binding</keyword>
<keyword id="KW-0560">Oxidoreductase</keyword>
<sequence>MSEITHRTKTRPVKVGPLTIGGNNEVVIQSMTTTKTHDVEATVAEINRLAEAGCQIVRVACPDERAANAIADIKKQISIPLVVDIHFDYKLALKAIEGGADKIRINPGNIGRREKVEAVVKAAKEKGIPIRIGVNAGSLEKRILEKYGYPTADGMVESALHHIKILEDLDFHDIIVSMKASDVNLAIEAYEKASKAFDYPLHLGITESGTLFAGTVKSAAGLGAILSKGIGNTLRISLSADPVEEVKVARELLKSFGLASNAATLISCPTCGRIEIDLISIANEVEEYISKVKAPIKVAVLGCAVNGPGEAREADIGIAGARGEGLLFRKGQIVRKVPEETMVEELKKEIDKLAEEHYAKLEAEKAKAEQETQKA</sequence>
<protein>
    <recommendedName>
        <fullName evidence="1">4-hydroxy-3-methylbut-2-en-1-yl diphosphate synthase (flavodoxin)</fullName>
        <ecNumber evidence="1">1.17.7.3</ecNumber>
    </recommendedName>
    <alternativeName>
        <fullName evidence="1">1-hydroxy-2-methyl-2-(E)-butenyl 4-diphosphate synthase</fullName>
    </alternativeName>
</protein>
<feature type="chain" id="PRO_1000011437" description="4-hydroxy-3-methylbut-2-en-1-yl diphosphate synthase (flavodoxin)">
    <location>
        <begin position="1"/>
        <end position="375"/>
    </location>
</feature>
<feature type="binding site" evidence="1">
    <location>
        <position position="268"/>
    </location>
    <ligand>
        <name>[4Fe-4S] cluster</name>
        <dbReference type="ChEBI" id="CHEBI:49883"/>
    </ligand>
</feature>
<feature type="binding site" evidence="1">
    <location>
        <position position="271"/>
    </location>
    <ligand>
        <name>[4Fe-4S] cluster</name>
        <dbReference type="ChEBI" id="CHEBI:49883"/>
    </ligand>
</feature>
<feature type="binding site" evidence="1">
    <location>
        <position position="303"/>
    </location>
    <ligand>
        <name>[4Fe-4S] cluster</name>
        <dbReference type="ChEBI" id="CHEBI:49883"/>
    </ligand>
</feature>
<feature type="binding site" evidence="1">
    <location>
        <position position="310"/>
    </location>
    <ligand>
        <name>[4Fe-4S] cluster</name>
        <dbReference type="ChEBI" id="CHEBI:49883"/>
    </ligand>
</feature>
<reference key="1">
    <citation type="journal article" date="2007" name="Nat. Biotechnol.">
        <title>Comparative analysis of the complete genome sequence of the plant growth-promoting bacterium Bacillus amyloliquefaciens FZB42.</title>
        <authorList>
            <person name="Chen X.H."/>
            <person name="Koumoutsi A."/>
            <person name="Scholz R."/>
            <person name="Eisenreich A."/>
            <person name="Schneider K."/>
            <person name="Heinemeyer I."/>
            <person name="Morgenstern B."/>
            <person name="Voss B."/>
            <person name="Hess W.R."/>
            <person name="Reva O."/>
            <person name="Junge H."/>
            <person name="Voigt B."/>
            <person name="Jungblut P.R."/>
            <person name="Vater J."/>
            <person name="Suessmuth R."/>
            <person name="Liesegang H."/>
            <person name="Strittmatter A."/>
            <person name="Gottschalk G."/>
            <person name="Borriss R."/>
        </authorList>
    </citation>
    <scope>NUCLEOTIDE SEQUENCE [LARGE SCALE GENOMIC DNA]</scope>
    <source>
        <strain>DSM 23117 / BGSC 10A6 / LMG 26770 / FZB42</strain>
    </source>
</reference>
<proteinExistence type="inferred from homology"/>